<accession>A1KGT3</accession>
<protein>
    <recommendedName>
        <fullName evidence="1">Probable M18 family aminopeptidase 2</fullName>
        <ecNumber evidence="1">3.4.11.-</ecNumber>
    </recommendedName>
</protein>
<feature type="chain" id="PRO_1000013698" description="Probable M18 family aminopeptidase 2">
    <location>
        <begin position="1"/>
        <end position="433"/>
    </location>
</feature>
<feature type="binding site" evidence="1">
    <location>
        <position position="79"/>
    </location>
    <ligand>
        <name>Zn(2+)</name>
        <dbReference type="ChEBI" id="CHEBI:29105"/>
    </ligand>
</feature>
<feature type="binding site" evidence="1">
    <location>
        <position position="153"/>
    </location>
    <ligand>
        <name>Zn(2+)</name>
        <dbReference type="ChEBI" id="CHEBI:29105"/>
    </ligand>
</feature>
<feature type="binding site" evidence="1">
    <location>
        <position position="404"/>
    </location>
    <ligand>
        <name>Zn(2+)</name>
        <dbReference type="ChEBI" id="CHEBI:29105"/>
    </ligand>
</feature>
<proteinExistence type="inferred from homology"/>
<evidence type="ECO:0000255" key="1">
    <source>
        <dbReference type="HAMAP-Rule" id="MF_00467"/>
    </source>
</evidence>
<reference key="1">
    <citation type="journal article" date="2007" name="Proc. Natl. Acad. Sci. U.S.A.">
        <title>Genome plasticity of BCG and impact on vaccine efficacy.</title>
        <authorList>
            <person name="Brosch R."/>
            <person name="Gordon S.V."/>
            <person name="Garnier T."/>
            <person name="Eiglmeier K."/>
            <person name="Frigui W."/>
            <person name="Valenti P."/>
            <person name="Dos Santos S."/>
            <person name="Duthoy S."/>
            <person name="Lacroix C."/>
            <person name="Garcia-Pelayo C."/>
            <person name="Inwald J.K."/>
            <person name="Golby P."/>
            <person name="Garcia J.N."/>
            <person name="Hewinson R.G."/>
            <person name="Behr M.A."/>
            <person name="Quail M.A."/>
            <person name="Churcher C."/>
            <person name="Barrell B.G."/>
            <person name="Parkhill J."/>
            <person name="Cole S.T."/>
        </authorList>
    </citation>
    <scope>NUCLEOTIDE SEQUENCE [LARGE SCALE GENOMIC DNA]</scope>
    <source>
        <strain>BCG / Pasteur 1173P2</strain>
    </source>
</reference>
<organism>
    <name type="scientific">Mycobacterium bovis (strain BCG / Pasteur 1173P2)</name>
    <dbReference type="NCBI Taxonomy" id="410289"/>
    <lineage>
        <taxon>Bacteria</taxon>
        <taxon>Bacillati</taxon>
        <taxon>Actinomycetota</taxon>
        <taxon>Actinomycetes</taxon>
        <taxon>Mycobacteriales</taxon>
        <taxon>Mycobacteriaceae</taxon>
        <taxon>Mycobacterium</taxon>
        <taxon>Mycobacterium tuberculosis complex</taxon>
    </lineage>
</organism>
<dbReference type="EC" id="3.4.11.-" evidence="1"/>
<dbReference type="EMBL" id="AM408590">
    <property type="protein sequence ID" value="CAL70838.1"/>
    <property type="molecule type" value="Genomic_DNA"/>
</dbReference>
<dbReference type="RefSeq" id="WP_003404103.1">
    <property type="nucleotide sequence ID" value="NC_008769.1"/>
</dbReference>
<dbReference type="SMR" id="A1KGT3"/>
<dbReference type="KEGG" id="mbb:BCG_0852"/>
<dbReference type="HOGENOM" id="CLU_019532_2_0_11"/>
<dbReference type="Proteomes" id="UP000001472">
    <property type="component" value="Chromosome"/>
</dbReference>
<dbReference type="GO" id="GO:0005737">
    <property type="term" value="C:cytoplasm"/>
    <property type="evidence" value="ECO:0007669"/>
    <property type="project" value="UniProtKB-ARBA"/>
</dbReference>
<dbReference type="GO" id="GO:0004177">
    <property type="term" value="F:aminopeptidase activity"/>
    <property type="evidence" value="ECO:0007669"/>
    <property type="project" value="UniProtKB-UniRule"/>
</dbReference>
<dbReference type="GO" id="GO:0008237">
    <property type="term" value="F:metallopeptidase activity"/>
    <property type="evidence" value="ECO:0007669"/>
    <property type="project" value="UniProtKB-UniRule"/>
</dbReference>
<dbReference type="GO" id="GO:0008270">
    <property type="term" value="F:zinc ion binding"/>
    <property type="evidence" value="ECO:0007669"/>
    <property type="project" value="UniProtKB-UniRule"/>
</dbReference>
<dbReference type="GO" id="GO:0006508">
    <property type="term" value="P:proteolysis"/>
    <property type="evidence" value="ECO:0007669"/>
    <property type="project" value="UniProtKB-UniRule"/>
</dbReference>
<dbReference type="CDD" id="cd05658">
    <property type="entry name" value="M18_DAP"/>
    <property type="match status" value="1"/>
</dbReference>
<dbReference type="FunFam" id="2.30.250.10:FF:000004">
    <property type="entry name" value="Probable M18 family aminopeptidase 2"/>
    <property type="match status" value="1"/>
</dbReference>
<dbReference type="Gene3D" id="2.30.250.10">
    <property type="entry name" value="Aminopeptidase i, Domain 2"/>
    <property type="match status" value="1"/>
</dbReference>
<dbReference type="Gene3D" id="3.40.630.10">
    <property type="entry name" value="Zn peptidases"/>
    <property type="match status" value="1"/>
</dbReference>
<dbReference type="HAMAP" id="MF_00467">
    <property type="entry name" value="Aminopeptidase_M18_2"/>
    <property type="match status" value="1"/>
</dbReference>
<dbReference type="InterPro" id="IPR022984">
    <property type="entry name" value="M18_aminopeptidase_2"/>
</dbReference>
<dbReference type="InterPro" id="IPR001948">
    <property type="entry name" value="Peptidase_M18"/>
</dbReference>
<dbReference type="InterPro" id="IPR023358">
    <property type="entry name" value="Peptidase_M18_dom2"/>
</dbReference>
<dbReference type="NCBIfam" id="NF002759">
    <property type="entry name" value="PRK02813.1"/>
    <property type="match status" value="1"/>
</dbReference>
<dbReference type="PANTHER" id="PTHR28570">
    <property type="entry name" value="ASPARTYL AMINOPEPTIDASE"/>
    <property type="match status" value="1"/>
</dbReference>
<dbReference type="PANTHER" id="PTHR28570:SF3">
    <property type="entry name" value="ASPARTYL AMINOPEPTIDASE"/>
    <property type="match status" value="1"/>
</dbReference>
<dbReference type="Pfam" id="PF02127">
    <property type="entry name" value="Peptidase_M18"/>
    <property type="match status" value="1"/>
</dbReference>
<dbReference type="PRINTS" id="PR00932">
    <property type="entry name" value="AMINO1PTASE"/>
</dbReference>
<dbReference type="SUPFAM" id="SSF101821">
    <property type="entry name" value="Aminopeptidase/glucanase lid domain"/>
    <property type="match status" value="1"/>
</dbReference>
<dbReference type="SUPFAM" id="SSF53187">
    <property type="entry name" value="Zn-dependent exopeptidases"/>
    <property type="match status" value="1"/>
</dbReference>
<keyword id="KW-0031">Aminopeptidase</keyword>
<keyword id="KW-0378">Hydrolase</keyword>
<keyword id="KW-0479">Metal-binding</keyword>
<keyword id="KW-0482">Metalloprotease</keyword>
<keyword id="KW-0645">Protease</keyword>
<keyword id="KW-0862">Zinc</keyword>
<sequence>MAATAHGLCEFIDASPSPFHVCATVAGRLLGAGYRELREADRWPDKPGRYFTVRAGSLVAWNAEQSGHTQVPFRIVGAHTDSPNLRVKQHPDRLVAGWHVVALQPYGGVWLHSWLDRDLGISGRLSVRDGTGVSHRLVRIDDPILRVPQLAIHLAEDRKSLTLDPQRHINAVWGVGERVESFVGYVAQRAGVAAADVLAADLMTHDLTPSALIGASVNGTASLLSAPRLDNQASCYAGMEALLAVDVDSASSGFVPVLAIFDHEEVGSASGHGAQSDLLSSVLERIVLAAGGTREDFLRRLTTSMLASADMAHATHPNYPDRHEPSHPIEVNAGPVLKVHPNLRYATDGRTAAAFALACQRAGVPMQRYEHRADLPCGSTIGPLAAARTGIPTVDVGAAQLAMHSARELMGAHDVAAYSAALQAFLSAELSEA</sequence>
<comment type="cofactor">
    <cofactor evidence="1">
        <name>Zn(2+)</name>
        <dbReference type="ChEBI" id="CHEBI:29105"/>
    </cofactor>
</comment>
<comment type="similarity">
    <text evidence="1">Belongs to the peptidase M18 family.</text>
</comment>
<gene>
    <name evidence="1" type="primary">apeB</name>
    <name type="ordered locus">BCG_0852</name>
</gene>
<name>APEB_MYCBP</name>